<accession>P07328</accession>
<proteinExistence type="evidence at protein level"/>
<sequence>MTGMSREEVESLIQEVLEVYPEKARKDRNKHLAVNDPAVTQSKKCIISNKKSQPGLMTIRGCAYAGSKGVVWGPIKDMIHISHGPVGCGQYSRAGRRNYYIGTTGVNAFVTMNFTSDFQEKDIVFGGDKKLAKLIDEVETLFPLNKGISVQSECPIGLIGDDIESVSKVKGAELSKTIVPVRCEGFRGVSQSLGHHIANDAVRDWVLGKRDEDTTFASTPYDVAIIGDYNIGGDAWSSRILLEEMGLRCVAQWSGDGSISEIELTPKVKLNLVHCYRSMNYISRHMEEKYGIPWMEYNFFGPTKTIESLRAIAAKFDESIQKKCEEVIAKYKPEWEAVVAKYRPRLEGKRVMLYIGGLRPRHVIGAYEDLGMEVVGTGYEFAHNDDYDRTMKEMGDSTLLYDDVTGYEFEEFVKRIKPDLIGSGIKEKFIFQKMGIPFREMHSWDYSGPYHGFDGFAIFARDMDMTLNNPCWKKLQAPWEASEGAEKVAASA</sequence>
<reference key="1">
    <citation type="journal article" date="1989" name="J. Bacteriol.">
        <title>Physical and genetic map of the major nif gene cluster from Azotobacter vinelandii.</title>
        <authorList>
            <person name="Jacobson M.R."/>
            <person name="Brigle K.E."/>
            <person name="Bennett L.T."/>
            <person name="Setterquist R.A."/>
            <person name="Wilson M.S."/>
            <person name="Cash V.L."/>
            <person name="Beynon J."/>
            <person name="Newton W.E."/>
            <person name="Dean D.R."/>
        </authorList>
    </citation>
    <scope>NUCLEOTIDE SEQUENCE [GENOMIC DNA]</scope>
    <source>
        <strain>ATCC 13705 / OP1 / DSM 366 / NCIMB 11614 / LMG 3878 / UW</strain>
    </source>
</reference>
<reference key="2">
    <citation type="journal article" date="1988" name="Nucleic Acids Res.">
        <title>Sequence of a 1.4 kb Eco RI fragment of Azotobacter vinelandii nif DNA.</title>
        <authorList>
            <person name="Hiratsuka K."/>
            <person name="Roy K.L."/>
        </authorList>
    </citation>
    <scope>NUCLEOTIDE SEQUENCE [GENOMIC DNA] OF 1-409</scope>
    <source>
        <strain>ATCC 13705 / OP1 / DSM 366 / NCIMB 11614 / LMG 3878 / UW</strain>
    </source>
</reference>
<reference key="3">
    <citation type="journal article" date="1985" name="Gene">
        <title>Complete nucleotide sequence of the Azotobacter vinelandii nitrogenase structural gene cluster.</title>
        <authorList>
            <person name="Brigle K.E."/>
            <person name="Newton W.E."/>
            <person name="Dean D.R."/>
        </authorList>
    </citation>
    <scope>NUCLEOTIDE SEQUENCE [GENOMIC DNA]</scope>
    <source>
        <strain>ATCC 13705 / OP1 / DSM 366 / NCIMB 11614 / LMG 3878 / UW</strain>
    </source>
</reference>
<reference key="4">
    <citation type="journal article" date="1978" name="J. Biol. Chem.">
        <title>Isolation and partial characterization of two different subunits from the molybdenum-iron protein of Azotobacter vinelandii nitrogenase.</title>
        <authorList>
            <person name="Lundell D.J."/>
            <person name="Howard J.B."/>
        </authorList>
    </citation>
    <scope>PROTEIN SEQUENCE OF 2-20</scope>
</reference>
<reference key="5">
    <citation type="journal article" date="1994" name="Mol. Microbiol.">
        <title>The FeSII protein of Azotobacter vinelandii is not essential for aerobic nitrogen fixation, but confers significant protection to oxygen-mediated inactivation of nitrogenase in vitro and in vivo.</title>
        <authorList>
            <person name="Moshiri F."/>
            <person name="Kim J.W."/>
            <person name="Fu C."/>
            <person name="Maier R.J."/>
        </authorList>
    </citation>
    <scope>ACTIVITY REGULATION</scope>
    <scope>INDUCTION</scope>
    <source>
        <strain>CA</strain>
    </source>
</reference>
<reference key="6">
    <citation type="journal article" date="1992" name="Nature">
        <title>Crystallographic structure and functional implications of the nitrogenase molybdenum-iron protein from Azotobacter vinelandii.</title>
        <authorList>
            <person name="Kim J."/>
            <person name="Rees D.C."/>
        </authorList>
    </citation>
    <scope>X-RAY CRYSTALLOGRAPHY (2.7 ANGSTROMS)</scope>
</reference>
<reference key="7">
    <citation type="journal article" date="1997" name="Nature">
        <title>Structure of ADP x [AlF(4)](-)-stabilized nitrogenase complex and its implications for signal transduction.</title>
        <authorList>
            <person name="Schindelin H."/>
            <person name="Kisker C."/>
            <person name="Schlessman J.L."/>
            <person name="Howard J.B."/>
            <person name="Rees D.C."/>
        </authorList>
    </citation>
    <scope>X-RAY CRYSTALLOGRAPHY (3.0 ANGSTROMS) IN COMPLEX WITH FE(8)-S(7) CLUSTER AND IRON-SULFUR-MOLYBDENUM CLUSTER</scope>
    <scope>SUBUNIT</scope>
    <scope>COFACTOR</scope>
</reference>
<reference key="8">
    <citation type="journal article" date="1997" name="Biochemistry">
        <title>Redox-dependent structural changes in the nitrogenase P-cluster.</title>
        <authorList>
            <person name="Peters J.W."/>
            <person name="Stowell M.H.B."/>
            <person name="Soltis S.M."/>
            <person name="Finnegan M.G."/>
            <person name="Johnson M.K."/>
            <person name="Rees D.C."/>
        </authorList>
    </citation>
    <scope>X-RAY CRYSTALLOGRAPHY (2.0 ANGSTROMS) IN COMPLEX WITH FE(8)-S(7) CLUSTER AND IRON-SULFUR-MOLYBDENUM CLUSTER</scope>
    <scope>SUBUNIT</scope>
    <scope>COFACTOR</scope>
</reference>
<reference key="9">
    <citation type="journal article" date="2001" name="Biochemistry">
        <title>MgATP-bound and nucleotide-free structures of a nitrogenase protein complex between the Leu 127Delta-Fe-protein and the MoFe-protein.</title>
        <authorList>
            <person name="Chiu H.-J."/>
            <person name="Peters J.W."/>
            <person name="Lanzilotta W.N."/>
            <person name="Ryle M.J."/>
            <person name="Seefeldt L.C."/>
            <person name="Howard J.B."/>
            <person name="Rees D.C."/>
        </authorList>
    </citation>
    <scope>X-RAY CRYSTALLOGRAPHY (2.2 ANGSTROMS) IN COMPLEX WITH FE(8)-S(7) CLUSTER AND IRON-SULFUR-MOLYBDENUM CLUSTER</scope>
    <scope>SUBUNIT</scope>
    <scope>COFACTOR</scope>
</reference>
<reference key="10">
    <citation type="journal article" date="2001" name="Biochemistry">
        <title>Mechanistic features and structure of the nitrogenase alpha-Gln195 MoFe protein.</title>
        <authorList>
            <person name="Soerlie M."/>
            <person name="Christiansen J."/>
            <person name="Lemon B.J."/>
            <person name="Peters J.W."/>
            <person name="Dean D.R."/>
            <person name="Hales B.J."/>
        </authorList>
    </citation>
    <scope>X-RAY CRYSTALLOGRAPHY (2.5 ANGSTROMS) OF MUTANT GLN-195 IN COMPLEX WITH IRON-SULFUR-MOLYBDENUM CLUSTER</scope>
    <scope>SUBUNIT</scope>
    <scope>COFACTOR</scope>
</reference>
<reference key="11">
    <citation type="journal article" date="2002" name="Biochemistry">
        <title>Biochemical and structural characterization of the cross-linked complex of nitrogenase: comparison to the ADP-AlF4(-)-stabilized structure.</title>
        <authorList>
            <person name="Schmid B."/>
            <person name="Einsle O."/>
            <person name="Chiu H.J."/>
            <person name="Willing A."/>
            <person name="Yoshida M."/>
            <person name="Howard J.B."/>
            <person name="Rees D.C."/>
        </authorList>
    </citation>
    <scope>X-RAY CRYSTALLOGRAPHY (2.3 ANGSTROMS) OF CROSS-LINKED HETERODIMER WITH FE-PROTEIN IN COMPLEX WITH FE(8)-S(7) CLUSTER AND IRON-SULFUR-MOLYBDENUM CLUSTER</scope>
    <scope>SUBUNIT</scope>
    <scope>COFACTOR</scope>
</reference>
<reference key="12">
    <citation type="journal article" date="2002" name="Science">
        <title>Structure of a cofactor-deficient nitrogenase MoFe protein.</title>
        <authorList>
            <person name="Schmid B."/>
            <person name="Ribbe M.W."/>
            <person name="Einsle O."/>
            <person name="Yoshida M."/>
            <person name="Thomas L.M."/>
            <person name="Dean D.R."/>
            <person name="Rees D.C."/>
            <person name="Burgess B.K."/>
        </authorList>
    </citation>
    <scope>X-RAY CRYSTALLOGRAPHY (2.3 ANGSTROMS)</scope>
</reference>
<reference key="13">
    <citation type="journal article" date="2002" name="Science">
        <title>Nitrogenase MoFe-protein at 1.16 A resolution: a central ligand in the FeMo-cofactor.</title>
        <authorList>
            <person name="Einsle O."/>
            <person name="Tezcan F.A."/>
            <person name="Andrade S.L.A."/>
            <person name="Schmid B."/>
            <person name="Yoshida M."/>
            <person name="Howard J.B."/>
            <person name="Rees D.C."/>
        </authorList>
    </citation>
    <scope>X-RAY CRYSTALLOGRAPHY (1.16 ANGSTROMS) IN COMPLEX WITH FE(7)-MO-S(9)-N CLUSTER</scope>
    <scope>SUBUNIT</scope>
    <scope>COFACTOR</scope>
</reference>
<reference key="14">
    <citation type="journal article" date="2005" name="Science">
        <title>Nitrogenase complexes: multiple docking sites for a nucleotide switch protein.</title>
        <authorList>
            <person name="Tezcan F.A."/>
            <person name="Kaiser J.T."/>
            <person name="Mustafi D."/>
            <person name="Walton M.Y."/>
            <person name="Howard J.B."/>
            <person name="Rees D.C."/>
        </authorList>
    </citation>
    <scope>X-RAY CRYSTALLOGRAPHY (2.10 ANGSTROMS) IN COMPLEX WITH FE(7)-MO-S(9)-N CLUSTER AND FE(8)-S(7) CLUSTER</scope>
    <scope>SUBUNIT</scope>
    <scope>COFACTOR</scope>
</reference>
<reference key="15">
    <citation type="journal article" date="2011" name="Science">
        <title>Evidence for interstitial carbon in nitrogenase FeMo cofactor.</title>
        <authorList>
            <person name="Spatzal T."/>
            <person name="Aksoyoglu M."/>
            <person name="Zhang L."/>
            <person name="Andrade S.L."/>
            <person name="Schleicher E."/>
            <person name="Weber S."/>
            <person name="Rees D.C."/>
            <person name="Einsle O."/>
        </authorList>
    </citation>
    <scope>X-RAY CRYSTALLOGRAPHY (1.00 ANGSTROMS) IN COMPLEX WITH FE(8)-S(7) CLUSTER AND 7FE-MO-9S-C-HOMOCITRYL CLUSTER</scope>
    <scope>COFACTOR</scope>
    <scope>SUBUNIT</scope>
</reference>
<organism>
    <name type="scientific">Azotobacter vinelandii</name>
    <dbReference type="NCBI Taxonomy" id="354"/>
    <lineage>
        <taxon>Bacteria</taxon>
        <taxon>Pseudomonadati</taxon>
        <taxon>Pseudomonadota</taxon>
        <taxon>Gammaproteobacteria</taxon>
        <taxon>Pseudomonadales</taxon>
        <taxon>Pseudomonadaceae</taxon>
        <taxon>Azotobacter</taxon>
    </lineage>
</organism>
<name>NIFD_AZOVI</name>
<comment type="function">
    <text>This molybdenum-iron protein is part of the nitrogenase complex that catalyzes the key enzymatic reactions in nitrogen fixation.</text>
</comment>
<comment type="catalytic activity">
    <reaction>
        <text>N2 + 8 reduced [2Fe-2S]-[ferredoxin] + 16 ATP + 16 H2O = H2 + 8 oxidized [2Fe-2S]-[ferredoxin] + 2 NH4(+) + 16 ADP + 16 phosphate + 6 H(+)</text>
        <dbReference type="Rhea" id="RHEA:21448"/>
        <dbReference type="Rhea" id="RHEA-COMP:10000"/>
        <dbReference type="Rhea" id="RHEA-COMP:10001"/>
        <dbReference type="ChEBI" id="CHEBI:15377"/>
        <dbReference type="ChEBI" id="CHEBI:15378"/>
        <dbReference type="ChEBI" id="CHEBI:17997"/>
        <dbReference type="ChEBI" id="CHEBI:18276"/>
        <dbReference type="ChEBI" id="CHEBI:28938"/>
        <dbReference type="ChEBI" id="CHEBI:30616"/>
        <dbReference type="ChEBI" id="CHEBI:33737"/>
        <dbReference type="ChEBI" id="CHEBI:33738"/>
        <dbReference type="ChEBI" id="CHEBI:43474"/>
        <dbReference type="ChEBI" id="CHEBI:456216"/>
        <dbReference type="EC" id="1.18.6.1"/>
    </reaction>
</comment>
<comment type="cofactor">
    <cofactor>
        <name>[8Fe-7S] cluster</name>
        <dbReference type="ChEBI" id="CHEBI:21143"/>
    </cofactor>
    <text>Binds 1 [8Fe-7S] cluster per heterodimer.</text>
</comment>
<comment type="cofactor">
    <cofactor>
        <name>[7Fe-Mo-9S-C-homocitryl] cluster</name>
        <dbReference type="ChEBI" id="CHEBI:30409"/>
    </cofactor>
    <text>Binds 1 [7Fe-Mo-9S-C-homocitryl] cluster per subunit.</text>
</comment>
<comment type="activity regulation">
    <text evidence="8">Nitrogenase holoenzyme is subject to 'conformational protection' by FeSII; under oxidizing conditions FeSII binds to the holoenzyme and reversibly protects it from oxidation (PubMed:7830548).</text>
</comment>
<comment type="subunit">
    <text evidence="1 2 3 4 5 6 9 10">Tetramer of two alpha and two beta chains. Forms complex with the iron protein (nitrogenase component 2).</text>
</comment>
<comment type="induction">
    <text evidence="8">Constitutively expressed during log and stationary phase in sucrose-limited cultures, its levels decrease during stationary phase (at protein level).</text>
</comment>
<comment type="similarity">
    <text evidence="11">Belongs to the NifD/NifK/NifE/NifN family.</text>
</comment>
<keyword id="KW-0002">3D-structure</keyword>
<keyword id="KW-0067">ATP-binding</keyword>
<keyword id="KW-0903">Direct protein sequencing</keyword>
<keyword id="KW-0408">Iron</keyword>
<keyword id="KW-0411">Iron-sulfur</keyword>
<keyword id="KW-0479">Metal-binding</keyword>
<keyword id="KW-0500">Molybdenum</keyword>
<keyword id="KW-0535">Nitrogen fixation</keyword>
<keyword id="KW-0547">Nucleotide-binding</keyword>
<keyword id="KW-0560">Oxidoreductase</keyword>
<gene>
    <name type="primary">nifD</name>
</gene>
<protein>
    <recommendedName>
        <fullName>Nitrogenase molybdenum-iron protein alpha chain</fullName>
        <ecNumber>1.18.6.1</ecNumber>
    </recommendedName>
    <alternativeName>
        <fullName>Dinitrogenase</fullName>
    </alternativeName>
    <alternativeName>
        <fullName>Nitrogenase component I</fullName>
    </alternativeName>
</protein>
<feature type="initiator methionine" description="Removed" evidence="7">
    <location>
        <position position="1"/>
    </location>
</feature>
<feature type="chain" id="PRO_0000153058" description="Nitrogenase molybdenum-iron protein alpha chain">
    <location>
        <begin position="2"/>
        <end position="492"/>
    </location>
</feature>
<feature type="binding site">
    <location>
        <position position="62"/>
    </location>
    <ligand>
        <name>[8Fe-7S] cluster</name>
        <dbReference type="ChEBI" id="CHEBI:21143"/>
        <note>ligand shared with beta chain</note>
    </ligand>
</feature>
<feature type="binding site">
    <location>
        <position position="88"/>
    </location>
    <ligand>
        <name>[8Fe-7S] cluster</name>
        <dbReference type="ChEBI" id="CHEBI:21143"/>
        <note>ligand shared with beta chain</note>
    </ligand>
</feature>
<feature type="binding site">
    <location>
        <position position="154"/>
    </location>
    <ligand>
        <name>[8Fe-7S] cluster</name>
        <dbReference type="ChEBI" id="CHEBI:21143"/>
        <note>ligand shared with beta chain</note>
    </ligand>
</feature>
<feature type="binding site">
    <location>
        <position position="275"/>
    </location>
    <ligand>
        <name>[7Fe-Mo-9S-C-homocitryl] cluster</name>
        <dbReference type="ChEBI" id="CHEBI:30409"/>
    </ligand>
</feature>
<feature type="binding site">
    <location>
        <position position="442"/>
    </location>
    <ligand>
        <name>[7Fe-Mo-9S-C-homocitryl] cluster</name>
        <dbReference type="ChEBI" id="CHEBI:30409"/>
    </ligand>
</feature>
<feature type="mutagenesis site" description="No nitrogenase activity.">
    <original>H</original>
    <variation>Q</variation>
    <location>
        <position position="195"/>
    </location>
</feature>
<feature type="sequence conflict" description="In Ref. 3; AAA22143." evidence="11" ref="3">
    <original>G</original>
    <variation>R</variation>
    <location>
        <position position="3"/>
    </location>
</feature>
<feature type="sequence conflict" description="In Ref. 3; AAA22143." evidence="11" ref="3">
    <original>S</original>
    <variation>C</variation>
    <location>
        <position position="190"/>
    </location>
</feature>
<feature type="sequence conflict" description="In Ref. 3; AAA22143." evidence="11" ref="3">
    <original>E</original>
    <variation>A</variation>
    <location>
        <position position="212"/>
    </location>
</feature>
<feature type="sequence conflict" description="In Ref. 3; AAA22143." evidence="11" ref="3">
    <original>SISE</original>
    <variation>YISQ</variation>
    <location>
        <begin position="258"/>
        <end position="261"/>
    </location>
</feature>
<feature type="sequence conflict" description="In Ref. 3; AAA22143." evidence="11" ref="3">
    <original>Y</original>
    <variation>M</variation>
    <location>
        <position position="407"/>
    </location>
</feature>
<feature type="helix" evidence="13">
    <location>
        <begin position="6"/>
        <end position="17"/>
    </location>
</feature>
<feature type="helix" evidence="13">
    <location>
        <begin position="22"/>
        <end position="29"/>
    </location>
</feature>
<feature type="strand" evidence="13">
    <location>
        <begin position="32"/>
        <end position="34"/>
    </location>
</feature>
<feature type="helix" evidence="13">
    <location>
        <begin position="42"/>
        <end position="44"/>
    </location>
</feature>
<feature type="helix" evidence="13">
    <location>
        <begin position="63"/>
        <end position="67"/>
    </location>
</feature>
<feature type="helix" evidence="13">
    <location>
        <begin position="68"/>
        <end position="72"/>
    </location>
</feature>
<feature type="strand" evidence="13">
    <location>
        <begin position="78"/>
        <end position="86"/>
    </location>
</feature>
<feature type="helix" evidence="13">
    <location>
        <begin position="87"/>
        <end position="91"/>
    </location>
</feature>
<feature type="turn" evidence="13">
    <location>
        <begin position="92"/>
        <end position="94"/>
    </location>
</feature>
<feature type="turn" evidence="13">
    <location>
        <begin position="104"/>
        <end position="106"/>
    </location>
</feature>
<feature type="strand" evidence="15">
    <location>
        <begin position="110"/>
        <end position="112"/>
    </location>
</feature>
<feature type="helix" evidence="13">
    <location>
        <begin position="120"/>
        <end position="125"/>
    </location>
</feature>
<feature type="helix" evidence="13">
    <location>
        <begin position="128"/>
        <end position="141"/>
    </location>
</feature>
<feature type="strand" evidence="13">
    <location>
        <begin position="148"/>
        <end position="152"/>
    </location>
</feature>
<feature type="helix" evidence="13">
    <location>
        <begin position="155"/>
        <end position="158"/>
    </location>
</feature>
<feature type="helix" evidence="13">
    <location>
        <begin position="163"/>
        <end position="174"/>
    </location>
</feature>
<feature type="strand" evidence="13">
    <location>
        <begin position="178"/>
        <end position="181"/>
    </location>
</feature>
<feature type="strand" evidence="13">
    <location>
        <begin position="187"/>
        <end position="190"/>
    </location>
</feature>
<feature type="helix" evidence="13">
    <location>
        <begin position="191"/>
        <end position="205"/>
    </location>
</feature>
<feature type="turn" evidence="13">
    <location>
        <begin position="206"/>
        <end position="212"/>
    </location>
</feature>
<feature type="strand" evidence="13">
    <location>
        <begin position="222"/>
        <end position="228"/>
    </location>
</feature>
<feature type="turn" evidence="13">
    <location>
        <begin position="232"/>
        <end position="235"/>
    </location>
</feature>
<feature type="helix" evidence="13">
    <location>
        <begin position="236"/>
        <end position="244"/>
    </location>
</feature>
<feature type="strand" evidence="13">
    <location>
        <begin position="248"/>
        <end position="254"/>
    </location>
</feature>
<feature type="helix" evidence="13">
    <location>
        <begin position="259"/>
        <end position="264"/>
    </location>
</feature>
<feature type="helix" evidence="13">
    <location>
        <begin position="265"/>
        <end position="267"/>
    </location>
</feature>
<feature type="strand" evidence="13">
    <location>
        <begin position="269"/>
        <end position="274"/>
    </location>
</feature>
<feature type="helix" evidence="13">
    <location>
        <begin position="276"/>
        <end position="290"/>
    </location>
</feature>
<feature type="strand" evidence="13">
    <location>
        <begin position="294"/>
        <end position="296"/>
    </location>
</feature>
<feature type="helix" evidence="13">
    <location>
        <begin position="302"/>
        <end position="313"/>
    </location>
</feature>
<feature type="helix" evidence="13">
    <location>
        <begin position="318"/>
        <end position="346"/>
    </location>
</feature>
<feature type="strand" evidence="13">
    <location>
        <begin position="350"/>
        <end position="353"/>
    </location>
</feature>
<feature type="strand" evidence="13">
    <location>
        <begin position="355"/>
        <end position="358"/>
    </location>
</feature>
<feature type="helix" evidence="13">
    <location>
        <begin position="359"/>
        <end position="362"/>
    </location>
</feature>
<feature type="helix" evidence="13">
    <location>
        <begin position="364"/>
        <end position="368"/>
    </location>
</feature>
<feature type="turn" evidence="13">
    <location>
        <begin position="369"/>
        <end position="371"/>
    </location>
</feature>
<feature type="strand" evidence="13">
    <location>
        <begin position="373"/>
        <end position="381"/>
    </location>
</feature>
<feature type="helix" evidence="13">
    <location>
        <begin position="384"/>
        <end position="391"/>
    </location>
</feature>
<feature type="strand" evidence="13">
    <location>
        <begin position="399"/>
        <end position="403"/>
    </location>
</feature>
<feature type="helix" evidence="13">
    <location>
        <begin position="406"/>
        <end position="416"/>
    </location>
</feature>
<feature type="strand" evidence="13">
    <location>
        <begin position="419"/>
        <end position="423"/>
    </location>
</feature>
<feature type="helix" evidence="13">
    <location>
        <begin position="425"/>
        <end position="433"/>
    </location>
</feature>
<feature type="strand" evidence="13">
    <location>
        <begin position="438"/>
        <end position="443"/>
    </location>
</feature>
<feature type="helix" evidence="13">
    <location>
        <begin position="444"/>
        <end position="446"/>
    </location>
</feature>
<feature type="helix" evidence="13">
    <location>
        <begin position="452"/>
        <end position="467"/>
    </location>
</feature>
<feature type="helix" evidence="13">
    <location>
        <begin position="470"/>
        <end position="473"/>
    </location>
</feature>
<feature type="strand" evidence="12">
    <location>
        <begin position="475"/>
        <end position="477"/>
    </location>
</feature>
<feature type="helix" evidence="14">
    <location>
        <begin position="478"/>
        <end position="480"/>
    </location>
</feature>
<dbReference type="EC" id="1.18.6.1"/>
<dbReference type="EMBL" id="M20568">
    <property type="protein sequence ID" value="AAA64710.1"/>
    <property type="molecule type" value="Genomic_DNA"/>
</dbReference>
<dbReference type="EMBL" id="M11579">
    <property type="protein sequence ID" value="AAA22143.1"/>
    <property type="molecule type" value="Genomic_DNA"/>
</dbReference>
<dbReference type="EMBL" id="X06886">
    <property type="protein sequence ID" value="CAA30004.1"/>
    <property type="molecule type" value="Genomic_DNA"/>
</dbReference>
<dbReference type="PIR" id="A43049">
    <property type="entry name" value="NIAVMA"/>
</dbReference>
<dbReference type="RefSeq" id="WP_012698832.1">
    <property type="nucleotide sequence ID" value="NZ_FPKM01000020.1"/>
</dbReference>
<dbReference type="PDB" id="1FP4">
    <property type="method" value="X-ray"/>
    <property type="resolution" value="2.50 A"/>
    <property type="chains" value="A/C=1-492"/>
</dbReference>
<dbReference type="PDB" id="1G20">
    <property type="method" value="X-ray"/>
    <property type="resolution" value="2.20 A"/>
    <property type="chains" value="A/C=1-492"/>
</dbReference>
<dbReference type="PDB" id="1G21">
    <property type="method" value="X-ray"/>
    <property type="resolution" value="3.00 A"/>
    <property type="chains" value="A/C=1-492"/>
</dbReference>
<dbReference type="PDB" id="1L5H">
    <property type="method" value="X-ray"/>
    <property type="resolution" value="2.30 A"/>
    <property type="chains" value="A=2-492"/>
</dbReference>
<dbReference type="PDB" id="1M1N">
    <property type="method" value="X-ray"/>
    <property type="resolution" value="1.16 A"/>
    <property type="chains" value="A/C/E/G=2-492"/>
</dbReference>
<dbReference type="PDB" id="1M1Y">
    <property type="method" value="X-ray"/>
    <property type="resolution" value="3.20 A"/>
    <property type="chains" value="A/C/I/K=2-492"/>
</dbReference>
<dbReference type="PDB" id="1M34">
    <property type="method" value="X-ray"/>
    <property type="resolution" value="2.30 A"/>
    <property type="chains" value="A/C/I/K=2-492"/>
</dbReference>
<dbReference type="PDB" id="1N2C">
    <property type="method" value="X-ray"/>
    <property type="resolution" value="3.00 A"/>
    <property type="chains" value="A/C=2-492"/>
</dbReference>
<dbReference type="PDB" id="2AFH">
    <property type="method" value="X-ray"/>
    <property type="resolution" value="2.10 A"/>
    <property type="chains" value="A/C=2-492"/>
</dbReference>
<dbReference type="PDB" id="2AFI">
    <property type="method" value="X-ray"/>
    <property type="resolution" value="3.10 A"/>
    <property type="chains" value="A/C/I/K=2-492"/>
</dbReference>
<dbReference type="PDB" id="2MIN">
    <property type="method" value="X-ray"/>
    <property type="resolution" value="2.03 A"/>
    <property type="chains" value="A/C=2-492"/>
</dbReference>
<dbReference type="PDB" id="3K1A">
    <property type="method" value="X-ray"/>
    <property type="resolution" value="2.23 A"/>
    <property type="chains" value="A/C=2-492"/>
</dbReference>
<dbReference type="PDB" id="3MIN">
    <property type="method" value="X-ray"/>
    <property type="resolution" value="2.03 A"/>
    <property type="chains" value="A/C=2-492"/>
</dbReference>
<dbReference type="PDB" id="3U7Q">
    <property type="method" value="X-ray"/>
    <property type="resolution" value="1.00 A"/>
    <property type="chains" value="A/C=1-492"/>
</dbReference>
<dbReference type="PDB" id="4ND8">
    <property type="method" value="X-ray"/>
    <property type="resolution" value="2.00 A"/>
    <property type="chains" value="A/C=1-492"/>
</dbReference>
<dbReference type="PDB" id="4TKU">
    <property type="method" value="X-ray"/>
    <property type="resolution" value="1.43 A"/>
    <property type="chains" value="A/C=1-492"/>
</dbReference>
<dbReference type="PDB" id="4TKV">
    <property type="method" value="X-ray"/>
    <property type="resolution" value="1.50 A"/>
    <property type="chains" value="A/C=1-492"/>
</dbReference>
<dbReference type="PDB" id="4WNA">
    <property type="method" value="X-ray"/>
    <property type="resolution" value="2.00 A"/>
    <property type="chains" value="A/C=1-492"/>
</dbReference>
<dbReference type="PDB" id="4WZA">
    <property type="method" value="X-ray"/>
    <property type="resolution" value="1.90 A"/>
    <property type="chains" value="A/C=4-480"/>
</dbReference>
<dbReference type="PDB" id="4WZB">
    <property type="method" value="X-ray"/>
    <property type="resolution" value="2.30 A"/>
    <property type="chains" value="A/C=4-480"/>
</dbReference>
<dbReference type="PDB" id="4XPI">
    <property type="method" value="X-ray"/>
    <property type="resolution" value="1.97 A"/>
    <property type="chains" value="A/C=3-492"/>
</dbReference>
<dbReference type="PDB" id="5BVG">
    <property type="method" value="X-ray"/>
    <property type="resolution" value="1.60 A"/>
    <property type="chains" value="A/C=1-492"/>
</dbReference>
<dbReference type="PDB" id="5BVH">
    <property type="method" value="X-ray"/>
    <property type="resolution" value="1.53 A"/>
    <property type="chains" value="A/C=1-492"/>
</dbReference>
<dbReference type="PDB" id="5CX1">
    <property type="method" value="X-ray"/>
    <property type="resolution" value="1.75 A"/>
    <property type="chains" value="A/C/E/G/I/K/M/O=1-480"/>
</dbReference>
<dbReference type="PDB" id="5VQ4">
    <property type="method" value="X-ray"/>
    <property type="resolution" value="2.30 A"/>
    <property type="chains" value="A/C=1-492"/>
</dbReference>
<dbReference type="PDB" id="6BBL">
    <property type="method" value="X-ray"/>
    <property type="resolution" value="1.68 A"/>
    <property type="chains" value="A/C=1-492"/>
</dbReference>
<dbReference type="PDB" id="6CDK">
    <property type="method" value="X-ray"/>
    <property type="resolution" value="2.10 A"/>
    <property type="chains" value="A/C=1-492"/>
</dbReference>
<dbReference type="PDB" id="6O7L">
    <property type="method" value="X-ray"/>
    <property type="resolution" value="2.26 A"/>
    <property type="chains" value="A/C=1-492"/>
</dbReference>
<dbReference type="PDB" id="6O7M">
    <property type="method" value="X-ray"/>
    <property type="resolution" value="1.40 A"/>
    <property type="chains" value="A/C=1-492"/>
</dbReference>
<dbReference type="PDB" id="6O7N">
    <property type="method" value="X-ray"/>
    <property type="resolution" value="1.75 A"/>
    <property type="chains" value="A/C=1-492"/>
</dbReference>
<dbReference type="PDB" id="6O7O">
    <property type="method" value="X-ray"/>
    <property type="resolution" value="1.89 A"/>
    <property type="chains" value="A/C=1-492"/>
</dbReference>
<dbReference type="PDB" id="6O7P">
    <property type="method" value="X-ray"/>
    <property type="resolution" value="1.70 A"/>
    <property type="chains" value="A/C=1-492"/>
</dbReference>
<dbReference type="PDB" id="6O7Q">
    <property type="method" value="X-ray"/>
    <property type="resolution" value="2.00 A"/>
    <property type="chains" value="A/C=1-492"/>
</dbReference>
<dbReference type="PDB" id="6O7R">
    <property type="method" value="X-ray"/>
    <property type="resolution" value="2.27 A"/>
    <property type="chains" value="A/C=1-492"/>
</dbReference>
<dbReference type="PDB" id="6O7S">
    <property type="method" value="X-ray"/>
    <property type="resolution" value="2.27 A"/>
    <property type="chains" value="A/C=1-492"/>
</dbReference>
<dbReference type="PDB" id="6OP1">
    <property type="method" value="X-ray"/>
    <property type="resolution" value="1.70 A"/>
    <property type="chains" value="A/C=4-480"/>
</dbReference>
<dbReference type="PDB" id="6OP2">
    <property type="method" value="X-ray"/>
    <property type="resolution" value="1.90 A"/>
    <property type="chains" value="A/C=4-480"/>
</dbReference>
<dbReference type="PDB" id="6OP3">
    <property type="method" value="X-ray"/>
    <property type="resolution" value="1.60 A"/>
    <property type="chains" value="A/C=4-480"/>
</dbReference>
<dbReference type="PDB" id="6OP4">
    <property type="method" value="X-ray"/>
    <property type="resolution" value="2.30 A"/>
    <property type="chains" value="A/C=4-480"/>
</dbReference>
<dbReference type="PDB" id="6UG0">
    <property type="method" value="X-ray"/>
    <property type="resolution" value="1.83 A"/>
    <property type="chains" value="A/C=1-492"/>
</dbReference>
<dbReference type="PDB" id="6VXT">
    <property type="method" value="X-ray"/>
    <property type="resolution" value="1.74 A"/>
    <property type="chains" value="A/C=1-492"/>
</dbReference>
<dbReference type="PDB" id="7JRF">
    <property type="method" value="X-ray"/>
    <property type="resolution" value="1.33 A"/>
    <property type="chains" value="A/C=1-492"/>
</dbReference>
<dbReference type="PDB" id="7MCI">
    <property type="method" value="X-ray"/>
    <property type="resolution" value="1.65 A"/>
    <property type="chains" value="A/C=1-492"/>
</dbReference>
<dbReference type="PDB" id="7UT6">
    <property type="method" value="EM"/>
    <property type="resolution" value="1.91 A"/>
    <property type="chains" value="A/C=1-492"/>
</dbReference>
<dbReference type="PDB" id="7UT7">
    <property type="method" value="EM"/>
    <property type="resolution" value="1.91 A"/>
    <property type="chains" value="A/C=1-492"/>
</dbReference>
<dbReference type="PDB" id="7UT8">
    <property type="method" value="EM"/>
    <property type="resolution" value="2.43 A"/>
    <property type="chains" value="A/C=1-492"/>
</dbReference>
<dbReference type="PDB" id="7UT9">
    <property type="method" value="EM"/>
    <property type="resolution" value="2.44 A"/>
    <property type="chains" value="A/C=1-492"/>
</dbReference>
<dbReference type="PDB" id="7UTA">
    <property type="method" value="EM"/>
    <property type="resolution" value="2.40 A"/>
    <property type="chains" value="A/C=1-492"/>
</dbReference>
<dbReference type="PDB" id="8BTS">
    <property type="method" value="X-ray"/>
    <property type="resolution" value="3.03 A"/>
    <property type="chains" value="A/C/H/J=3-492"/>
</dbReference>
<dbReference type="PDB" id="8CRS">
    <property type="method" value="EM"/>
    <property type="resolution" value="2.04 A"/>
    <property type="chains" value="A/C=1-480"/>
</dbReference>
<dbReference type="PDB" id="8DBX">
    <property type="method" value="EM"/>
    <property type="resolution" value="1.92 A"/>
    <property type="chains" value="A/C=1-492"/>
</dbReference>
<dbReference type="PDB" id="8DBY">
    <property type="method" value="EM"/>
    <property type="resolution" value="2.26 A"/>
    <property type="chains" value="A/C=1-492"/>
</dbReference>
<dbReference type="PDB" id="8DFC">
    <property type="method" value="EM"/>
    <property type="resolution" value="2.48 A"/>
    <property type="chains" value="A/C=1-492"/>
</dbReference>
<dbReference type="PDB" id="8DFD">
    <property type="method" value="EM"/>
    <property type="resolution" value="2.12 A"/>
    <property type="chains" value="A/C=1-492"/>
</dbReference>
<dbReference type="PDB" id="8DPN">
    <property type="method" value="EM"/>
    <property type="resolution" value="2.49 A"/>
    <property type="chains" value="A/C=1-492"/>
</dbReference>
<dbReference type="PDB" id="8E3T">
    <property type="method" value="X-ray"/>
    <property type="resolution" value="2.20 A"/>
    <property type="chains" value="A/C=1-492"/>
</dbReference>
<dbReference type="PDB" id="8E3U">
    <property type="method" value="X-ray"/>
    <property type="resolution" value="1.99 A"/>
    <property type="chains" value="A/C=1-492"/>
</dbReference>
<dbReference type="PDB" id="8E3V">
    <property type="method" value="X-ray"/>
    <property type="resolution" value="2.00 A"/>
    <property type="chains" value="A/C=1-492"/>
</dbReference>
<dbReference type="PDB" id="8ENL">
    <property type="method" value="EM"/>
    <property type="resolution" value="2.37 A"/>
    <property type="chains" value="A/C=4-480"/>
</dbReference>
<dbReference type="PDB" id="8ENM">
    <property type="method" value="EM"/>
    <property type="resolution" value="2.14 A"/>
    <property type="chains" value="A/C=1-492"/>
</dbReference>
<dbReference type="PDB" id="8ENN">
    <property type="method" value="EM"/>
    <property type="resolution" value="2.58 A"/>
    <property type="chains" value="A/C=4-480"/>
</dbReference>
<dbReference type="PDB" id="8ENO">
    <property type="method" value="EM"/>
    <property type="resolution" value="2.71 A"/>
    <property type="chains" value="A/C=4-480"/>
</dbReference>
<dbReference type="PDB" id="8P8G">
    <property type="method" value="X-ray"/>
    <property type="resolution" value="1.55 A"/>
    <property type="chains" value="A/C=3-492"/>
</dbReference>
<dbReference type="PDB" id="8RHP">
    <property type="method" value="EM"/>
    <property type="resolution" value="2.89 A"/>
    <property type="chains" value="A/D/H/K=1-492"/>
</dbReference>
<dbReference type="PDB" id="9CJB">
    <property type="method" value="EM"/>
    <property type="resolution" value="1.97 A"/>
    <property type="chains" value="A/C=1-492"/>
</dbReference>
<dbReference type="PDB" id="9CJC">
    <property type="method" value="EM"/>
    <property type="resolution" value="2.04 A"/>
    <property type="chains" value="A/C=1-492"/>
</dbReference>
<dbReference type="PDB" id="9CJD">
    <property type="method" value="EM"/>
    <property type="resolution" value="1.92 A"/>
    <property type="chains" value="A/C=1-492"/>
</dbReference>
<dbReference type="PDB" id="9CJE">
    <property type="method" value="EM"/>
    <property type="resolution" value="2.22 A"/>
    <property type="chains" value="A/C=1-492"/>
</dbReference>
<dbReference type="PDB" id="9CJF">
    <property type="method" value="EM"/>
    <property type="resolution" value="2.33 A"/>
    <property type="chains" value="A/C=1-492"/>
</dbReference>
<dbReference type="PDB" id="9CTZ">
    <property type="method" value="EM"/>
    <property type="resolution" value="2.67 A"/>
    <property type="chains" value="A/C=1-492"/>
</dbReference>
<dbReference type="PDB" id="9CU0">
    <property type="method" value="EM"/>
    <property type="resolution" value="3.94 A"/>
    <property type="chains" value="A/C=1-492"/>
</dbReference>
<dbReference type="PDB" id="9CU1">
    <property type="method" value="EM"/>
    <property type="resolution" value="2.83 A"/>
    <property type="chains" value="A/C/H/J=1-492"/>
</dbReference>
<dbReference type="PDB" id="9CU2">
    <property type="method" value="EM"/>
    <property type="resolution" value="2.27 A"/>
    <property type="chains" value="A/C/H/J=1-492"/>
</dbReference>
<dbReference type="PDBsum" id="1FP4"/>
<dbReference type="PDBsum" id="1G20"/>
<dbReference type="PDBsum" id="1G21"/>
<dbReference type="PDBsum" id="1L5H"/>
<dbReference type="PDBsum" id="1M1N"/>
<dbReference type="PDBsum" id="1M1Y"/>
<dbReference type="PDBsum" id="1M34"/>
<dbReference type="PDBsum" id="1N2C"/>
<dbReference type="PDBsum" id="2AFH"/>
<dbReference type="PDBsum" id="2AFI"/>
<dbReference type="PDBsum" id="2MIN"/>
<dbReference type="PDBsum" id="3K1A"/>
<dbReference type="PDBsum" id="3MIN"/>
<dbReference type="PDBsum" id="3U7Q"/>
<dbReference type="PDBsum" id="4ND8"/>
<dbReference type="PDBsum" id="4TKU"/>
<dbReference type="PDBsum" id="4TKV"/>
<dbReference type="PDBsum" id="4WNA"/>
<dbReference type="PDBsum" id="4WZA"/>
<dbReference type="PDBsum" id="4WZB"/>
<dbReference type="PDBsum" id="4XPI"/>
<dbReference type="PDBsum" id="5BVG"/>
<dbReference type="PDBsum" id="5BVH"/>
<dbReference type="PDBsum" id="5CX1"/>
<dbReference type="PDBsum" id="5VQ4"/>
<dbReference type="PDBsum" id="6BBL"/>
<dbReference type="PDBsum" id="6CDK"/>
<dbReference type="PDBsum" id="6O7L"/>
<dbReference type="PDBsum" id="6O7M"/>
<dbReference type="PDBsum" id="6O7N"/>
<dbReference type="PDBsum" id="6O7O"/>
<dbReference type="PDBsum" id="6O7P"/>
<dbReference type="PDBsum" id="6O7Q"/>
<dbReference type="PDBsum" id="6O7R"/>
<dbReference type="PDBsum" id="6O7S"/>
<dbReference type="PDBsum" id="6OP1"/>
<dbReference type="PDBsum" id="6OP2"/>
<dbReference type="PDBsum" id="6OP3"/>
<dbReference type="PDBsum" id="6OP4"/>
<dbReference type="PDBsum" id="6UG0"/>
<dbReference type="PDBsum" id="6VXT"/>
<dbReference type="PDBsum" id="7JRF"/>
<dbReference type="PDBsum" id="7MCI"/>
<dbReference type="PDBsum" id="7UT6"/>
<dbReference type="PDBsum" id="7UT7"/>
<dbReference type="PDBsum" id="7UT8"/>
<dbReference type="PDBsum" id="7UT9"/>
<dbReference type="PDBsum" id="7UTA"/>
<dbReference type="PDBsum" id="8BTS"/>
<dbReference type="PDBsum" id="8CRS"/>
<dbReference type="PDBsum" id="8DBX"/>
<dbReference type="PDBsum" id="8DBY"/>
<dbReference type="PDBsum" id="8DFC"/>
<dbReference type="PDBsum" id="8DFD"/>
<dbReference type="PDBsum" id="8DPN"/>
<dbReference type="PDBsum" id="8E3T"/>
<dbReference type="PDBsum" id="8E3U"/>
<dbReference type="PDBsum" id="8E3V"/>
<dbReference type="PDBsum" id="8ENL"/>
<dbReference type="PDBsum" id="8ENM"/>
<dbReference type="PDBsum" id="8ENN"/>
<dbReference type="PDBsum" id="8ENO"/>
<dbReference type="PDBsum" id="8P8G"/>
<dbReference type="PDBsum" id="8RHP"/>
<dbReference type="PDBsum" id="9CJB"/>
<dbReference type="PDBsum" id="9CJC"/>
<dbReference type="PDBsum" id="9CJD"/>
<dbReference type="PDBsum" id="9CJE"/>
<dbReference type="PDBsum" id="9CJF"/>
<dbReference type="PDBsum" id="9CTZ"/>
<dbReference type="PDBsum" id="9CU0"/>
<dbReference type="PDBsum" id="9CU1"/>
<dbReference type="PDBsum" id="9CU2"/>
<dbReference type="EMDB" id="EMD-19178"/>
<dbReference type="EMDB" id="EMD-26756"/>
<dbReference type="EMDB" id="EMD-26757"/>
<dbReference type="EMDB" id="EMD-26760"/>
<dbReference type="EMDB" id="EMD-26763"/>
<dbReference type="EMDB" id="EMD-26764"/>
<dbReference type="EMDB" id="EMD-26957"/>
<dbReference type="EMDB" id="EMD-27316"/>
<dbReference type="EMDB" id="EMD-27317"/>
<dbReference type="EMDB" id="EMD-27404"/>
<dbReference type="EMDB" id="EMD-27405"/>
<dbReference type="EMDB" id="EMD-27639"/>
<dbReference type="EMDB" id="EMD-28272"/>
<dbReference type="EMDB" id="EMD-28273"/>
<dbReference type="EMDB" id="EMD-28274"/>
<dbReference type="EMDB" id="EMD-28275"/>
<dbReference type="EMDB" id="EMD-45626"/>
<dbReference type="EMDB" id="EMD-45627"/>
<dbReference type="EMDB" id="EMD-45628"/>
<dbReference type="EMDB" id="EMD-45629"/>
<dbReference type="EMDB" id="EMD-45630"/>
<dbReference type="EMDB" id="EMD-45923"/>
<dbReference type="EMDB" id="EMD-45924"/>
<dbReference type="EMDB" id="EMD-45925"/>
<dbReference type="EMDB" id="EMD-45926"/>
<dbReference type="SMR" id="P07328"/>
<dbReference type="DIP" id="DIP-6252N"/>
<dbReference type="GeneID" id="88183606"/>
<dbReference type="BioCyc" id="MetaCyc:MONOMER-19493"/>
<dbReference type="BRENDA" id="1.18.6.1">
    <property type="organism ID" value="49"/>
</dbReference>
<dbReference type="EvolutionaryTrace" id="P07328"/>
<dbReference type="GO" id="GO:0016612">
    <property type="term" value="C:molybdenum-iron nitrogenase complex"/>
    <property type="evidence" value="ECO:0007669"/>
    <property type="project" value="InterPro"/>
</dbReference>
<dbReference type="GO" id="GO:0005524">
    <property type="term" value="F:ATP binding"/>
    <property type="evidence" value="ECO:0007669"/>
    <property type="project" value="UniProtKB-KW"/>
</dbReference>
<dbReference type="GO" id="GO:0051536">
    <property type="term" value="F:iron-sulfur cluster binding"/>
    <property type="evidence" value="ECO:0007669"/>
    <property type="project" value="UniProtKB-KW"/>
</dbReference>
<dbReference type="GO" id="GO:0046872">
    <property type="term" value="F:metal ion binding"/>
    <property type="evidence" value="ECO:0007669"/>
    <property type="project" value="UniProtKB-KW"/>
</dbReference>
<dbReference type="GO" id="GO:0016163">
    <property type="term" value="F:nitrogenase activity"/>
    <property type="evidence" value="ECO:0007669"/>
    <property type="project" value="UniProtKB-EC"/>
</dbReference>
<dbReference type="GO" id="GO:0009399">
    <property type="term" value="P:nitrogen fixation"/>
    <property type="evidence" value="ECO:0007669"/>
    <property type="project" value="UniProtKB-KW"/>
</dbReference>
<dbReference type="CDD" id="cd01976">
    <property type="entry name" value="Nitrogenase_MoFe_alpha"/>
    <property type="match status" value="1"/>
</dbReference>
<dbReference type="Gene3D" id="3.40.50.1980">
    <property type="entry name" value="Nitrogenase molybdenum iron protein domain"/>
    <property type="match status" value="3"/>
</dbReference>
<dbReference type="InterPro" id="IPR000510">
    <property type="entry name" value="Nase/OxRdtase_comp1"/>
</dbReference>
<dbReference type="InterPro" id="IPR010143">
    <property type="entry name" value="Nase_comp1_asu"/>
</dbReference>
<dbReference type="InterPro" id="IPR000318">
    <property type="entry name" value="Nase_comp1_CS"/>
</dbReference>
<dbReference type="InterPro" id="IPR005972">
    <property type="entry name" value="Nase_Mo-Fe_asu"/>
</dbReference>
<dbReference type="NCBIfam" id="TIGR01862">
    <property type="entry name" value="N2-ase-Ialpha"/>
    <property type="match status" value="1"/>
</dbReference>
<dbReference type="NCBIfam" id="TIGR01282">
    <property type="entry name" value="nifD"/>
    <property type="match status" value="1"/>
</dbReference>
<dbReference type="PANTHER" id="PTHR43457">
    <property type="entry name" value="NITROGENASE MOLYBDENUM-IRON PROTEIN ALPHA CHAIN"/>
    <property type="match status" value="1"/>
</dbReference>
<dbReference type="PANTHER" id="PTHR43457:SF1">
    <property type="entry name" value="NITROGENASE MOLYBDENUM-IRON PROTEIN ALPHA CHAIN"/>
    <property type="match status" value="1"/>
</dbReference>
<dbReference type="Pfam" id="PF00148">
    <property type="entry name" value="Oxidored_nitro"/>
    <property type="match status" value="1"/>
</dbReference>
<dbReference type="SUPFAM" id="SSF53807">
    <property type="entry name" value="Helical backbone' metal receptor"/>
    <property type="match status" value="1"/>
</dbReference>
<dbReference type="PROSITE" id="PS00699">
    <property type="entry name" value="NITROGENASE_1_1"/>
    <property type="match status" value="1"/>
</dbReference>
<dbReference type="PROSITE" id="PS00090">
    <property type="entry name" value="NITROGENASE_1_2"/>
    <property type="match status" value="1"/>
</dbReference>
<evidence type="ECO:0000269" key="1">
    <source>
    </source>
</evidence>
<evidence type="ECO:0000269" key="2">
    <source>
    </source>
</evidence>
<evidence type="ECO:0000269" key="3">
    <source>
    </source>
</evidence>
<evidence type="ECO:0000269" key="4">
    <source>
    </source>
</evidence>
<evidence type="ECO:0000269" key="5">
    <source>
    </source>
</evidence>
<evidence type="ECO:0000269" key="6">
    <source>
    </source>
</evidence>
<evidence type="ECO:0000269" key="7">
    <source>
    </source>
</evidence>
<evidence type="ECO:0000269" key="8">
    <source>
    </source>
</evidence>
<evidence type="ECO:0000269" key="9">
    <source>
    </source>
</evidence>
<evidence type="ECO:0000269" key="10">
    <source>
    </source>
</evidence>
<evidence type="ECO:0000305" key="11"/>
<evidence type="ECO:0007829" key="12">
    <source>
        <dbReference type="PDB" id="2MIN"/>
    </source>
</evidence>
<evidence type="ECO:0007829" key="13">
    <source>
        <dbReference type="PDB" id="3U7Q"/>
    </source>
</evidence>
<evidence type="ECO:0007829" key="14">
    <source>
        <dbReference type="PDB" id="4XPI"/>
    </source>
</evidence>
<evidence type="ECO:0007829" key="15">
    <source>
        <dbReference type="PDB" id="8ENO"/>
    </source>
</evidence>